<name>Z_MACHU</name>
<gene>
    <name evidence="2" type="primary">Z</name>
</gene>
<proteinExistence type="evidence at protein level"/>
<protein>
    <recommendedName>
        <fullName evidence="2">RING finger protein Z</fullName>
        <shortName evidence="2">Protein Z</shortName>
    </recommendedName>
    <alternativeName>
        <fullName evidence="2">Zinc-binding protein</fullName>
    </alternativeName>
</protein>
<sequence>MGNCNKPPKRPPNTQTSAAQPSAEFRRTALPSLYGRYNCKCCWFADTNLITCNDHYLCLRCHQTMLRNSELCHICWKPLPTSITVPVEPSAPPP</sequence>
<organismHost>
    <name type="scientific">Calomys callosus</name>
    <name type="common">Large vesper mouse</name>
    <dbReference type="NCBI Taxonomy" id="56210"/>
</organismHost>
<organismHost>
    <name type="scientific">Chlorocebus aethiops</name>
    <name type="common">Green monkey</name>
    <name type="synonym">Cercopithecus aethiops</name>
    <dbReference type="NCBI Taxonomy" id="9534"/>
</organismHost>
<organismHost>
    <name type="scientific">Homo sapiens</name>
    <name type="common">Human</name>
    <dbReference type="NCBI Taxonomy" id="9606"/>
</organismHost>
<evidence type="ECO:0000250" key="1">
    <source>
        <dbReference type="UniProtKB" id="P18541"/>
    </source>
</evidence>
<evidence type="ECO:0000255" key="2">
    <source>
        <dbReference type="HAMAP-Rule" id="MF_04087"/>
    </source>
</evidence>
<evidence type="ECO:0000256" key="3">
    <source>
        <dbReference type="SAM" id="MobiDB-lite"/>
    </source>
</evidence>
<comment type="function">
    <text evidence="1 2">Plays a crucial role in virion assembly and budding. Expressed late in the virus life cycle, it acts as an inhibitor of viral transcription and RNA synthesis by interacting with the viral polymerase L. Presumably recruits the NP encapsidated genome to cellular membranes at budding sites via direct interaction with NP. Plays critical roles in the final steps of viral release by interacting with host TSG101, a member of the vacuolar protein-sorting pathway and using other cellular host proteins involved in vesicle formation pathway. The budding of the virus progeny occurs after association of protein Z with the viral glycoprotein complex SSP-GP1-GP2 at the cell periphery, step that requires myristoylation of protein Z. Also selectively represses protein production by associating with host eIF4E (By similarity). In cell-based minigenome assay, has an inhibitory effect on the ribonucleoprotein machinery (vRNP), which is responsible for the replication and transcription of the viral genome (By similarity).</text>
</comment>
<comment type="subunit">
    <text evidence="2">Interacts with protein NP; this interaction probably directs the encapsidated genome to budding sites. Interacts (via RING domain) with polymerase L; this interaction inhibits viral transcription and replication, Z partially blocks the product exit tunnel for the releasing nascent RNA product. Interacts with the glycoprotein complex; this interaction plays a role in virion budding. Interacts with host eIF4E; this interaction results in eIF4E reduced affinity for its substrate, the 5'-m7 G cap structure. Interacts (via late-budding domain) with host TSG101; this interaction is essential for budding and release of viral particles. Interacts with host RPLP0; this interaction may serve to load ribosome-like particles inside the virion. Interacts with host PML; this interaction induces PML bodies redistribution in the cytoplasm upon viral infection.</text>
</comment>
<comment type="interaction">
    <interactant intactId="EBI-3647473">
        <id>Q6IUF9</id>
    </interactant>
    <interactant intactId="EBI-995350">
        <id>O95786</id>
        <label>RIGI</label>
    </interactant>
    <organismsDiffer>true</organismsDiffer>
    <experiments>3</experiments>
</comment>
<comment type="subcellular location">
    <subcellularLocation>
        <location evidence="2">Virion</location>
    </subcellularLocation>
    <subcellularLocation>
        <location evidence="2">Host cytoplasm</location>
        <location evidence="2">Host perinuclear region</location>
    </subcellularLocation>
    <subcellularLocation>
        <location evidence="2">Host cell membrane</location>
        <topology evidence="2">Lipid-anchor</topology>
        <orientation evidence="2">Cytoplasmic side</orientation>
    </subcellularLocation>
    <text evidence="2">Mainly perinuclear. During budding, associates at the inner side of the plasma membrane of infected cells.</text>
</comment>
<comment type="domain">
    <text evidence="2">Late-budding domains (L domains) are short sequence motifs essential for viral particle budding. They recruit proteins of the host ESCRT machinery (Endosomal Sorting Complex Required for Transport) or ESCRT-associated proteins.</text>
</comment>
<comment type="PTM">
    <text evidence="1">Myristoylation is required for the role of RING finger protein Z in assembly and budding.</text>
</comment>
<comment type="similarity">
    <text>Belongs to the arenaviridae Z protein family.</text>
</comment>
<organism>
    <name type="scientific">Machupo virus</name>
    <name type="common">MACV</name>
    <dbReference type="NCBI Taxonomy" id="3052317"/>
    <lineage>
        <taxon>Viruses</taxon>
        <taxon>Riboviria</taxon>
        <taxon>Orthornavirae</taxon>
        <taxon>Negarnaviricota</taxon>
        <taxon>Polyploviricotina</taxon>
        <taxon>Ellioviricetes</taxon>
        <taxon>Bunyavirales</taxon>
        <taxon>Arenaviridae</taxon>
        <taxon>Mammarenavirus</taxon>
    </lineage>
</organism>
<feature type="initiator methionine" description="Removed; by host" evidence="2">
    <location>
        <position position="1"/>
    </location>
</feature>
<feature type="chain" id="PRO_0000361035" description="RING finger protein Z" evidence="2">
    <location>
        <begin position="2"/>
        <end position="94"/>
    </location>
</feature>
<feature type="zinc finger region" description="RING-type; atypical" evidence="2">
    <location>
        <begin position="39"/>
        <end position="75"/>
    </location>
</feature>
<feature type="region of interest" description="Disordered" evidence="3">
    <location>
        <begin position="1"/>
        <end position="22"/>
    </location>
</feature>
<feature type="short sequence motif" description="PTAP/PSAP motif" evidence="2">
    <location>
        <begin position="89"/>
        <end position="92"/>
    </location>
</feature>
<feature type="lipid moiety-binding region" description="N-myristoyl glycine; by host" evidence="2">
    <location>
        <position position="2"/>
    </location>
</feature>
<reference key="1">
    <citation type="submission" date="2004-05" db="EMBL/GenBank/DDBJ databases">
        <authorList>
            <person name="Hajjaj A."/>
            <person name="Chain P.S.G."/>
            <person name="Smith K.L."/>
            <person name="Imbro P.M."/>
            <person name="Malfatti S.A."/>
        </authorList>
    </citation>
    <scope>NUCLEOTIDE SEQUENCE [GENOMIC RNA]</scope>
    <source>
        <strain>Chicava</strain>
    </source>
</reference>
<reference key="2">
    <citation type="submission" date="2004-05" db="EMBL/GenBank/DDBJ databases">
        <authorList>
            <person name="Jahrling P.B."/>
            <person name="Geisbert J."/>
            <person name="Ibrahim M.S."/>
        </authorList>
    </citation>
    <scope>NUCLEOTIDE SEQUENCE [GENOMIC RNA]</scope>
    <source>
        <strain>Chicava</strain>
    </source>
</reference>
<reference key="3">
    <citation type="submission" date="2005-03" db="EMBL/GenBank/DDBJ databases">
        <title>Genetic diversity of Machupo virus (family Arenaviridae): implications for synthetic antibody therapy for Bolivian hemorrhagic fever.</title>
        <authorList>
            <person name="Milazzo M.L."/>
            <person name="Cajimat M.N.B."/>
            <person name="Rollin P.E."/>
            <person name="Dodsley N.A."/>
            <person name="Nichol S.T."/>
            <person name="Bowen M.D."/>
            <person name="Ksiazek T.G."/>
            <person name="Fulhorst C.F."/>
        </authorList>
    </citation>
    <scope>NUCLEOTIDE SEQUENCE [GENOMIC RNA]</scope>
    <source>
        <strain>Chicava</strain>
    </source>
</reference>
<accession>Q6IUF9</accession>
<keyword id="KW-0002">3D-structure</keyword>
<keyword id="KW-1032">Host cell membrane</keyword>
<keyword id="KW-1035">Host cytoplasm</keyword>
<keyword id="KW-1043">Host membrane</keyword>
<keyword id="KW-0945">Host-virus interaction</keyword>
<keyword id="KW-0449">Lipoprotein</keyword>
<keyword id="KW-0472">Membrane</keyword>
<keyword id="KW-0479">Metal-binding</keyword>
<keyword id="KW-0519">Myristate</keyword>
<keyword id="KW-1198">Viral budding</keyword>
<keyword id="KW-1187">Viral budding via the host ESCRT complexes</keyword>
<keyword id="KW-1188">Viral release from host cell</keyword>
<keyword id="KW-0946">Virion</keyword>
<keyword id="KW-0862">Zinc</keyword>
<keyword id="KW-0863">Zinc-finger</keyword>
<dbReference type="EMBL" id="AY624354">
    <property type="protein sequence ID" value="AAT45079.1"/>
    <property type="molecule type" value="Genomic_RNA"/>
</dbReference>
<dbReference type="EMBL" id="AY960325">
    <property type="protein sequence ID" value="AAY27816.1"/>
    <property type="molecule type" value="Genomic_RNA"/>
</dbReference>
<dbReference type="PDB" id="7VGQ">
    <property type="method" value="EM"/>
    <property type="resolution" value="4.00 A"/>
    <property type="chains" value="B=2-94"/>
</dbReference>
<dbReference type="PDB" id="7VH1">
    <property type="method" value="EM"/>
    <property type="resolution" value="4.20 A"/>
    <property type="chains" value="B=2-94"/>
</dbReference>
<dbReference type="PDBsum" id="7VGQ"/>
<dbReference type="PDBsum" id="7VH1"/>
<dbReference type="EMDB" id="EMD-31975"/>
<dbReference type="EMDB" id="EMD-31983"/>
<dbReference type="SMR" id="Q6IUF9"/>
<dbReference type="IntAct" id="Q6IUF9">
    <property type="interactions" value="1"/>
</dbReference>
<dbReference type="Proteomes" id="UP000009263">
    <property type="component" value="Genome"/>
</dbReference>
<dbReference type="GO" id="GO:0044220">
    <property type="term" value="C:host cell perinuclear region of cytoplasm"/>
    <property type="evidence" value="ECO:0007669"/>
    <property type="project" value="UniProtKB-SubCell"/>
</dbReference>
<dbReference type="GO" id="GO:0020002">
    <property type="term" value="C:host cell plasma membrane"/>
    <property type="evidence" value="ECO:0007669"/>
    <property type="project" value="UniProtKB-SubCell"/>
</dbReference>
<dbReference type="GO" id="GO:0016020">
    <property type="term" value="C:membrane"/>
    <property type="evidence" value="ECO:0007669"/>
    <property type="project" value="UniProtKB-UniRule"/>
</dbReference>
<dbReference type="GO" id="GO:0044423">
    <property type="term" value="C:virion component"/>
    <property type="evidence" value="ECO:0007669"/>
    <property type="project" value="UniProtKB-UniRule"/>
</dbReference>
<dbReference type="GO" id="GO:0003723">
    <property type="term" value="F:RNA binding"/>
    <property type="evidence" value="ECO:0007669"/>
    <property type="project" value="UniProtKB-UniRule"/>
</dbReference>
<dbReference type="GO" id="GO:0008270">
    <property type="term" value="F:zinc ion binding"/>
    <property type="evidence" value="ECO:0007669"/>
    <property type="project" value="UniProtKB-UniRule"/>
</dbReference>
<dbReference type="GO" id="GO:0046761">
    <property type="term" value="P:viral budding from plasma membrane"/>
    <property type="evidence" value="ECO:0007669"/>
    <property type="project" value="UniProtKB-UniRule"/>
</dbReference>
<dbReference type="GO" id="GO:0039702">
    <property type="term" value="P:viral budding via host ESCRT complex"/>
    <property type="evidence" value="ECO:0007669"/>
    <property type="project" value="UniProtKB-UniRule"/>
</dbReference>
<dbReference type="Gene3D" id="3.30.160.310">
    <property type="match status" value="1"/>
</dbReference>
<dbReference type="HAMAP" id="MF_04087">
    <property type="entry name" value="ARENA_Z"/>
    <property type="match status" value="1"/>
</dbReference>
<dbReference type="InterPro" id="IPR024183">
    <property type="entry name" value="RING_finger_Z_arenaviridae"/>
</dbReference>
<dbReference type="InterPro" id="IPR038485">
    <property type="entry name" value="Z_RING-type_Znf_sf"/>
</dbReference>
<dbReference type="InterPro" id="IPR003224">
    <property type="entry name" value="Z_RING_Znf"/>
</dbReference>
<dbReference type="Pfam" id="PF03854">
    <property type="entry name" value="zf-P11"/>
    <property type="match status" value="1"/>
</dbReference>
<dbReference type="PIRSF" id="PIRSF004030">
    <property type="entry name" value="Z_ArenaV"/>
    <property type="match status" value="1"/>
</dbReference>